<organism>
    <name type="scientific">Glycine max</name>
    <name type="common">Soybean</name>
    <name type="synonym">Glycine hispida</name>
    <dbReference type="NCBI Taxonomy" id="3847"/>
    <lineage>
        <taxon>Eukaryota</taxon>
        <taxon>Viridiplantae</taxon>
        <taxon>Streptophyta</taxon>
        <taxon>Embryophyta</taxon>
        <taxon>Tracheophyta</taxon>
        <taxon>Spermatophyta</taxon>
        <taxon>Magnoliopsida</taxon>
        <taxon>eudicotyledons</taxon>
        <taxon>Gunneridae</taxon>
        <taxon>Pentapetalae</taxon>
        <taxon>rosids</taxon>
        <taxon>fabids</taxon>
        <taxon>Fabales</taxon>
        <taxon>Fabaceae</taxon>
        <taxon>Papilionoideae</taxon>
        <taxon>50 kb inversion clade</taxon>
        <taxon>NPAAA clade</taxon>
        <taxon>indigoferoid/millettioid clade</taxon>
        <taxon>Phaseoleae</taxon>
        <taxon>Glycine</taxon>
        <taxon>Glycine subgen. Soja</taxon>
    </lineage>
</organism>
<dbReference type="EMBL" id="M90504">
    <property type="protein sequence ID" value="AAA34005.1"/>
    <property type="molecule type" value="mRNA"/>
</dbReference>
<dbReference type="PIR" id="B44457">
    <property type="entry name" value="B44457"/>
</dbReference>
<dbReference type="RefSeq" id="NP_001236982.1">
    <property type="nucleotide sequence ID" value="NM_001250053.2"/>
</dbReference>
<dbReference type="RefSeq" id="XP_003524800.1">
    <property type="nucleotide sequence ID" value="XM_003524752.5"/>
</dbReference>
<dbReference type="RefSeq" id="XP_014631122.1">
    <property type="nucleotide sequence ID" value="XM_014775636.3"/>
</dbReference>
<dbReference type="RefSeq" id="XP_014631123.1">
    <property type="nucleotide sequence ID" value="XM_014775637.3"/>
</dbReference>
<dbReference type="RefSeq" id="XP_040871390.1">
    <property type="nucleotide sequence ID" value="XM_041015456.1"/>
</dbReference>
<dbReference type="SMR" id="P46279"/>
<dbReference type="FunCoup" id="P46279">
    <property type="interactions" value="6133"/>
</dbReference>
<dbReference type="STRING" id="3847.P46279"/>
<dbReference type="PaxDb" id="3847-GLYMA08G09000.1"/>
<dbReference type="EnsemblPlants" id="KRH42356">
    <property type="protein sequence ID" value="KRH42356"/>
    <property type="gene ID" value="GLYMA_08G085100"/>
</dbReference>
<dbReference type="EnsemblPlants" id="KRH42357">
    <property type="protein sequence ID" value="KRH42357"/>
    <property type="gene ID" value="GLYMA_08G085100"/>
</dbReference>
<dbReference type="EnsemblPlants" id="KRH42358">
    <property type="protein sequence ID" value="KRH42358"/>
    <property type="gene ID" value="GLYMA_08G085100"/>
</dbReference>
<dbReference type="EnsemblPlants" id="KRH58473">
    <property type="protein sequence ID" value="KRH58473"/>
    <property type="gene ID" value="GLYMA_05G130300"/>
</dbReference>
<dbReference type="EnsemblPlants" id="KRH58474">
    <property type="protein sequence ID" value="KRH58474"/>
    <property type="gene ID" value="GLYMA_05G130300"/>
</dbReference>
<dbReference type="EnsemblPlants" id="KRH58475">
    <property type="protein sequence ID" value="KRH58475"/>
    <property type="gene ID" value="GLYMA_05G130300"/>
</dbReference>
<dbReference type="GeneID" id="100793057"/>
<dbReference type="GeneID" id="547985"/>
<dbReference type="Gramene" id="KRH42356">
    <property type="protein sequence ID" value="KRH42356"/>
    <property type="gene ID" value="GLYMA_08G085100"/>
</dbReference>
<dbReference type="Gramene" id="KRH42357">
    <property type="protein sequence ID" value="KRH42357"/>
    <property type="gene ID" value="GLYMA_08G085100"/>
</dbReference>
<dbReference type="Gramene" id="KRH42358">
    <property type="protein sequence ID" value="KRH42358"/>
    <property type="gene ID" value="GLYMA_08G085100"/>
</dbReference>
<dbReference type="Gramene" id="KRH58473">
    <property type="protein sequence ID" value="KRH58473"/>
    <property type="gene ID" value="GLYMA_05G130300"/>
</dbReference>
<dbReference type="Gramene" id="KRH58474">
    <property type="protein sequence ID" value="KRH58474"/>
    <property type="gene ID" value="GLYMA_05G130300"/>
</dbReference>
<dbReference type="Gramene" id="KRH58475">
    <property type="protein sequence ID" value="KRH58475"/>
    <property type="gene ID" value="GLYMA_05G130300"/>
</dbReference>
<dbReference type="KEGG" id="gmx:100793057"/>
<dbReference type="KEGG" id="gmx:547985"/>
<dbReference type="eggNOG" id="KOG3298">
    <property type="taxonomic scope" value="Eukaryota"/>
</dbReference>
<dbReference type="HOGENOM" id="CLU_085878_2_0_1"/>
<dbReference type="InParanoid" id="P46279"/>
<dbReference type="OMA" id="TMRQPGL"/>
<dbReference type="OrthoDB" id="1162399at2759"/>
<dbReference type="Proteomes" id="UP000008827">
    <property type="component" value="Chromosome 5"/>
</dbReference>
<dbReference type="Proteomes" id="UP000008827">
    <property type="component" value="Chromosome 8"/>
</dbReference>
<dbReference type="GO" id="GO:0000932">
    <property type="term" value="C:P-body"/>
    <property type="evidence" value="ECO:0000318"/>
    <property type="project" value="GO_Central"/>
</dbReference>
<dbReference type="GO" id="GO:0005665">
    <property type="term" value="C:RNA polymerase II, core complex"/>
    <property type="evidence" value="ECO:0000318"/>
    <property type="project" value="GO_Central"/>
</dbReference>
<dbReference type="GO" id="GO:0003697">
    <property type="term" value="F:single-stranded DNA binding"/>
    <property type="evidence" value="ECO:0000318"/>
    <property type="project" value="GO_Central"/>
</dbReference>
<dbReference type="GO" id="GO:0003727">
    <property type="term" value="F:single-stranded RNA binding"/>
    <property type="evidence" value="ECO:0000318"/>
    <property type="project" value="GO_Central"/>
</dbReference>
<dbReference type="GO" id="GO:0031369">
    <property type="term" value="F:translation initiation factor binding"/>
    <property type="evidence" value="ECO:0000318"/>
    <property type="project" value="GO_Central"/>
</dbReference>
<dbReference type="GO" id="GO:0000956">
    <property type="term" value="P:nuclear-transcribed mRNA catabolic process"/>
    <property type="evidence" value="ECO:0000318"/>
    <property type="project" value="GO_Central"/>
</dbReference>
<dbReference type="GO" id="GO:0060213">
    <property type="term" value="P:positive regulation of nuclear-transcribed mRNA poly(A) tail shortening"/>
    <property type="evidence" value="ECO:0000318"/>
    <property type="project" value="GO_Central"/>
</dbReference>
<dbReference type="GO" id="GO:0045948">
    <property type="term" value="P:positive regulation of translational initiation"/>
    <property type="evidence" value="ECO:0000318"/>
    <property type="project" value="GO_Central"/>
</dbReference>
<dbReference type="GO" id="GO:0006367">
    <property type="term" value="P:transcription initiation at RNA polymerase II promoter"/>
    <property type="evidence" value="ECO:0000318"/>
    <property type="project" value="GO_Central"/>
</dbReference>
<dbReference type="CDD" id="cd04329">
    <property type="entry name" value="RNAP_II_Rpb7_N"/>
    <property type="match status" value="1"/>
</dbReference>
<dbReference type="CDD" id="cd04462">
    <property type="entry name" value="S1_RNAPII_Rpb7"/>
    <property type="match status" value="1"/>
</dbReference>
<dbReference type="FunFam" id="2.40.50.140:FF:000043">
    <property type="entry name" value="DNA-directed RNA polymerase II subunit RPB7"/>
    <property type="match status" value="1"/>
</dbReference>
<dbReference type="FunFam" id="3.30.1490.120:FF:000001">
    <property type="entry name" value="DNA-directed RNA polymerase II subunit RPB7"/>
    <property type="match status" value="1"/>
</dbReference>
<dbReference type="Gene3D" id="2.40.50.140">
    <property type="entry name" value="Nucleic acid-binding proteins"/>
    <property type="match status" value="1"/>
</dbReference>
<dbReference type="Gene3D" id="3.30.1490.120">
    <property type="entry name" value="RNA polymerase Rpb7-like, N-terminal domain"/>
    <property type="match status" value="1"/>
</dbReference>
<dbReference type="InterPro" id="IPR012340">
    <property type="entry name" value="NA-bd_OB-fold"/>
</dbReference>
<dbReference type="InterPro" id="IPR036898">
    <property type="entry name" value="RNA_pol_Rpb7-like_N_sf"/>
</dbReference>
<dbReference type="InterPro" id="IPR045113">
    <property type="entry name" value="Rpb7-like"/>
</dbReference>
<dbReference type="InterPro" id="IPR005576">
    <property type="entry name" value="Rpb7-like_N"/>
</dbReference>
<dbReference type="InterPro" id="IPR003029">
    <property type="entry name" value="S1_domain"/>
</dbReference>
<dbReference type="PANTHER" id="PTHR12709:SF4">
    <property type="entry name" value="DNA-DIRECTED RNA POLYMERASE II SUBUNIT RPB7"/>
    <property type="match status" value="1"/>
</dbReference>
<dbReference type="PANTHER" id="PTHR12709">
    <property type="entry name" value="DNA-DIRECTED RNA POLYMERASE II, III"/>
    <property type="match status" value="1"/>
</dbReference>
<dbReference type="Pfam" id="PF00575">
    <property type="entry name" value="S1"/>
    <property type="match status" value="1"/>
</dbReference>
<dbReference type="Pfam" id="PF03876">
    <property type="entry name" value="SHS2_Rpb7-N"/>
    <property type="match status" value="1"/>
</dbReference>
<dbReference type="SUPFAM" id="SSF88798">
    <property type="entry name" value="N-terminal, heterodimerisation domain of RBP7 (RpoE)"/>
    <property type="match status" value="1"/>
</dbReference>
<dbReference type="SUPFAM" id="SSF50249">
    <property type="entry name" value="Nucleic acid-binding proteins"/>
    <property type="match status" value="1"/>
</dbReference>
<accession>P46279</accession>
<protein>
    <recommendedName>
        <fullName>DNA-directed RNA polymerase II subunit RPB7</fullName>
        <shortName>RNA polymerase II subunit B7</shortName>
    </recommendedName>
</protein>
<comment type="function">
    <text evidence="1">DNA-dependent RNA polymerase catalyzes the transcription of DNA into RNA using the four ribonucleoside triphosphates as substrates. Component of RNA polymerase II which synthesizes mRNA precursors and many functional non-coding RNAs. Pol II is the central component of the basal RNA polymerase II transcription machinery. It is composed of mobile elements that move relative to each other. RPB7 is part of a subcomplex with RPB4 that binds to a pocket formed by RPB1, RPB2 and RPB6 at the base of the clamp element. The RPB4-RPB7 subcomplex seems to lock the clamp via RPB7 in the closed conformation thus preventing double-stranded DNA to enter the active site cleft. The RPB4-RPB7 subcomplex binds single-stranded DNA and RNA (By similarity).</text>
</comment>
<comment type="subunit">
    <text evidence="1">Component of the RNA polymerase II (Pol II) complex consisting of 12 subunits. RPB4 and RPB7 form a subcomplex that protrudes from the 10-subunit Pol II core complex (By similarity).</text>
</comment>
<comment type="subcellular location">
    <subcellularLocation>
        <location evidence="1">Nucleus</location>
    </subcellularLocation>
</comment>
<comment type="similarity">
    <text evidence="2">Belongs to the eukaryotic RPB7/RPC8 RNA polymerase subunit family.</text>
</comment>
<evidence type="ECO:0000250" key="1"/>
<evidence type="ECO:0000305" key="2"/>
<name>RPB7_SOYBN</name>
<reference key="1">
    <citation type="journal article" date="1992" name="J. Biol. Chem.">
        <title>Sequence of the fifth largest subunit of RNA polymerase II from plants.</title>
        <authorList>
            <person name="Ulmasov T.N."/>
            <person name="Guilfoyle T.J."/>
        </authorList>
    </citation>
    <scope>NUCLEOTIDE SEQUENCE [MRNA]</scope>
</reference>
<feature type="chain" id="PRO_0000073991" description="DNA-directed RNA polymerase II subunit RPB7">
    <location>
        <begin position="1"/>
        <end position="176"/>
    </location>
</feature>
<sequence length="176" mass="19625">MFFHIVLERNMQLHPRYFGRNLRDNLVSKLMKDVEGTCSGRHGFVVAVTGIENIGKGLIRDGTGFVTFPVKYQCVVFRPFKGEILEAVVTMVNKMGFFAEAGPVQIFVSNHLIPDDMEFQSGDMPNYTTSDGSVKIQKDSEVRLKIIGTRVDATEIFCIGTIKDDFLGVINDPATV</sequence>
<keyword id="KW-0240">DNA-directed RNA polymerase</keyword>
<keyword id="KW-0539">Nucleus</keyword>
<keyword id="KW-1185">Reference proteome</keyword>
<keyword id="KW-0804">Transcription</keyword>
<proteinExistence type="evidence at transcript level"/>